<comment type="subcellular location">
    <subcellularLocation>
        <location evidence="1">Secreted</location>
    </subcellularLocation>
</comment>
<comment type="tissue specificity">
    <text evidence="3">Expressed by the venom gland.</text>
</comment>
<comment type="similarity">
    <text evidence="3">Belongs to the three-finger toxin family. Short-chain subfamily. Orphan group I sub-subfamily.</text>
</comment>
<keyword id="KW-1015">Disulfide bond</keyword>
<keyword id="KW-0964">Secreted</keyword>
<keyword id="KW-0732">Signal</keyword>
<keyword id="KW-0800">Toxin</keyword>
<dbReference type="EMBL" id="AJ006139">
    <property type="protein sequence ID" value="CAB45156.1"/>
    <property type="molecule type" value="mRNA"/>
</dbReference>
<dbReference type="SMR" id="Q9W717"/>
<dbReference type="GO" id="GO:0005576">
    <property type="term" value="C:extracellular region"/>
    <property type="evidence" value="ECO:0007669"/>
    <property type="project" value="UniProtKB-SubCell"/>
</dbReference>
<dbReference type="GO" id="GO:0090729">
    <property type="term" value="F:toxin activity"/>
    <property type="evidence" value="ECO:0007669"/>
    <property type="project" value="UniProtKB-KW"/>
</dbReference>
<dbReference type="CDD" id="cd00206">
    <property type="entry name" value="TFP_snake_toxin"/>
    <property type="match status" value="1"/>
</dbReference>
<dbReference type="FunFam" id="2.10.60.10:FF:000024">
    <property type="entry name" value="Cytotoxin 1"/>
    <property type="match status" value="1"/>
</dbReference>
<dbReference type="Gene3D" id="2.10.60.10">
    <property type="entry name" value="CD59"/>
    <property type="match status" value="1"/>
</dbReference>
<dbReference type="InterPro" id="IPR003571">
    <property type="entry name" value="Snake_3FTx"/>
</dbReference>
<dbReference type="InterPro" id="IPR045860">
    <property type="entry name" value="Snake_toxin-like_sf"/>
</dbReference>
<dbReference type="InterPro" id="IPR018354">
    <property type="entry name" value="Snake_toxin_con_site"/>
</dbReference>
<dbReference type="InterPro" id="IPR054131">
    <property type="entry name" value="Toxin_cobra-type"/>
</dbReference>
<dbReference type="Pfam" id="PF21947">
    <property type="entry name" value="Toxin_cobra-type"/>
    <property type="match status" value="1"/>
</dbReference>
<dbReference type="SUPFAM" id="SSF57302">
    <property type="entry name" value="Snake toxin-like"/>
    <property type="match status" value="1"/>
</dbReference>
<dbReference type="PROSITE" id="PS00272">
    <property type="entry name" value="SNAKE_TOXIN"/>
    <property type="match status" value="1"/>
</dbReference>
<feature type="signal peptide" evidence="1">
    <location>
        <begin position="1"/>
        <end position="21"/>
    </location>
</feature>
<feature type="chain" id="PRO_0000035473" description="Neurotoxin-like protein NTL2">
    <location>
        <begin position="22"/>
        <end position="86"/>
    </location>
</feature>
<feature type="disulfide bond" evidence="2">
    <location>
        <begin position="24"/>
        <end position="45"/>
    </location>
</feature>
<feature type="disulfide bond" evidence="2">
    <location>
        <begin position="38"/>
        <end position="63"/>
    </location>
</feature>
<feature type="disulfide bond" evidence="2">
    <location>
        <begin position="67"/>
        <end position="78"/>
    </location>
</feature>
<feature type="disulfide bond" evidence="2">
    <location>
        <begin position="79"/>
        <end position="84"/>
    </location>
</feature>
<reference key="1">
    <citation type="submission" date="1998-05" db="EMBL/GenBank/DDBJ databases">
        <title>The polygene family of neurotoxins from Naja naja atra.</title>
        <authorList>
            <person name="Qian Y.-C."/>
            <person name="Fan C.-Y."/>
            <person name="Gong Y."/>
            <person name="Yang S.-L."/>
        </authorList>
    </citation>
    <scope>NUCLEOTIDE SEQUENCE [MRNA]</scope>
    <source>
        <tissue>Venom gland</tissue>
    </source>
</reference>
<accession>Q9W717</accession>
<sequence length="86" mass="9695">MKTLLLSLVVVTIVCLDLGYTRLCLSDYSIFSETIEICPDGHNFCFKKFPKGITRLPWVIRGCAATCPKAEARVYVDCCARDKCNR</sequence>
<proteinExistence type="inferred from homology"/>
<organism>
    <name type="scientific">Naja atra</name>
    <name type="common">Chinese cobra</name>
    <dbReference type="NCBI Taxonomy" id="8656"/>
    <lineage>
        <taxon>Eukaryota</taxon>
        <taxon>Metazoa</taxon>
        <taxon>Chordata</taxon>
        <taxon>Craniata</taxon>
        <taxon>Vertebrata</taxon>
        <taxon>Euteleostomi</taxon>
        <taxon>Lepidosauria</taxon>
        <taxon>Squamata</taxon>
        <taxon>Bifurcata</taxon>
        <taxon>Unidentata</taxon>
        <taxon>Episquamata</taxon>
        <taxon>Toxicofera</taxon>
        <taxon>Serpentes</taxon>
        <taxon>Colubroidea</taxon>
        <taxon>Elapidae</taxon>
        <taxon>Elapinae</taxon>
        <taxon>Naja</taxon>
    </lineage>
</organism>
<protein>
    <recommendedName>
        <fullName evidence="4">Neurotoxin-like protein NTL2</fullName>
    </recommendedName>
</protein>
<name>3SO1_NAJAT</name>
<evidence type="ECO:0000250" key="1"/>
<evidence type="ECO:0000250" key="2">
    <source>
        <dbReference type="UniProtKB" id="P60301"/>
    </source>
</evidence>
<evidence type="ECO:0000305" key="3"/>
<evidence type="ECO:0000312" key="4">
    <source>
        <dbReference type="EMBL" id="CAB45156.1"/>
    </source>
</evidence>